<organism>
    <name type="scientific">Actinobacillus pleuropneumoniae</name>
    <name type="common">Haemophilus pleuropneumoniae</name>
    <dbReference type="NCBI Taxonomy" id="715"/>
    <lineage>
        <taxon>Bacteria</taxon>
        <taxon>Pseudomonadati</taxon>
        <taxon>Pseudomonadota</taxon>
        <taxon>Gammaproteobacteria</taxon>
        <taxon>Pasteurellales</taxon>
        <taxon>Pasteurellaceae</taxon>
        <taxon>Actinobacillus</taxon>
    </lineage>
</organism>
<keyword id="KW-0002">3D-structure</keyword>
<keyword id="KW-0049">Antioxidant</keyword>
<keyword id="KW-0186">Copper</keyword>
<keyword id="KW-1015">Disulfide bond</keyword>
<keyword id="KW-0479">Metal-binding</keyword>
<keyword id="KW-0560">Oxidoreductase</keyword>
<keyword id="KW-0574">Periplasm</keyword>
<keyword id="KW-0732">Signal</keyword>
<keyword id="KW-0862">Zinc</keyword>
<gene>
    <name type="primary">sodC</name>
</gene>
<proteinExistence type="evidence at protein level"/>
<name>SODC_ACTPL</name>
<reference key="1">
    <citation type="journal article" date="1996" name="Infect. Immun.">
        <title>Cloning and molecular characterization of Cu,Zn superoxide dismutase from Actinobacillus pleuropneumoniae.</title>
        <authorList>
            <person name="Langford P.R."/>
            <person name="Loynds B.M."/>
            <person name="Kroll J.S."/>
        </authorList>
    </citation>
    <scope>NUCLEOTIDE SEQUENCE [GENOMIC DNA]</scope>
    <source>
        <strain>Serotype III / Isolate 1421 (Nielsen)</strain>
    </source>
</reference>
<reference key="2">
    <citation type="submission" date="1996-06" db="EMBL/GenBank/DDBJ databases">
        <authorList>
            <person name="Helie M.C."/>
            <person name="Sirois M."/>
            <person name="Ouellet C."/>
            <person name="Boissinot M."/>
        </authorList>
    </citation>
    <scope>NUCLEOTIDE SEQUENCE [GENOMIC DNA]</scope>
    <source>
        <strain>ATCC 27088 / DSM 13472 / CCM 5869 / S4074 / Serotype 1</strain>
    </source>
</reference>
<reference key="3">
    <citation type="journal article" date="1992" name="Nucleic Acids Res.">
        <title>recF in Actinobacillus pleuropneumoniae.</title>
        <authorList>
            <person name="Loynds B.M."/>
            <person name="Langford P.R."/>
            <person name="Kroll J.S."/>
        </authorList>
    </citation>
    <scope>NUCLEOTIDE SEQUENCE [GENOMIC DNA] OF 180-190</scope>
    <source>
        <strain>Serotype III / Isolate 1421 (Nielsen)</strain>
    </source>
</reference>
<reference key="4">
    <citation type="journal article" date="1995" name="Microbiology">
        <title>Bacterial [Cu,Zn]-superoxide dismutase: phylogenetically distinct from the eukaryotic enzyme, and not so rare after all!</title>
        <authorList>
            <person name="Kroll J.S."/>
            <person name="Langford P.R."/>
            <person name="Wilks K.E."/>
            <person name="Keil A.D."/>
        </authorList>
    </citation>
    <scope>NUCLEOTIDE SEQUENCE [GENOMIC DNA] OF 91-177</scope>
    <source>
        <strain>Serotype III / Isolate 1421 (Nielsen)</strain>
    </source>
</reference>
<reference key="5">
    <citation type="journal article" date="2000" name="J. Mol. Biol.">
        <title>Cu,Zn superoxide dismutase structure from a microbial pathogen establishes a class with a conserved dimer interface.</title>
        <authorList>
            <person name="Forest K.T."/>
            <person name="Langford P.R."/>
            <person name="Kroll J.S."/>
            <person name="Getzoff E.D."/>
        </authorList>
    </citation>
    <scope>X-RAY CRYSTALLOGRAPHY (1.9 ANGSTROMS)</scope>
</reference>
<evidence type="ECO:0000256" key="1">
    <source>
        <dbReference type="SAM" id="MobiDB-lite"/>
    </source>
</evidence>
<evidence type="ECO:0000305" key="2"/>
<evidence type="ECO:0007829" key="3">
    <source>
        <dbReference type="PDB" id="2APS"/>
    </source>
</evidence>
<accession>P24702</accession>
<accession>Q59135</accession>
<feature type="signal peptide">
    <location>
        <begin position="1"/>
        <end position="23"/>
    </location>
</feature>
<feature type="chain" id="PRO_0000032817" description="Superoxide dismutase [Cu-Zn]">
    <location>
        <begin position="24"/>
        <end position="190"/>
    </location>
</feature>
<feature type="region of interest" description="Disordered" evidence="1">
    <location>
        <begin position="162"/>
        <end position="181"/>
    </location>
</feature>
<feature type="binding site">
    <location>
        <position position="83"/>
    </location>
    <ligand>
        <name>Cu cation</name>
        <dbReference type="ChEBI" id="CHEBI:23378"/>
        <note>catalytic</note>
    </ligand>
</feature>
<feature type="binding site">
    <location>
        <position position="85"/>
    </location>
    <ligand>
        <name>Cu cation</name>
        <dbReference type="ChEBI" id="CHEBI:23378"/>
        <note>catalytic</note>
    </ligand>
</feature>
<feature type="binding site">
    <location>
        <position position="108"/>
    </location>
    <ligand>
        <name>Cu cation</name>
        <dbReference type="ChEBI" id="CHEBI:23378"/>
        <note>catalytic</note>
    </ligand>
</feature>
<feature type="binding site">
    <location>
        <position position="108"/>
    </location>
    <ligand>
        <name>Zn(2+)</name>
        <dbReference type="ChEBI" id="CHEBI:29105"/>
        <note>structural</note>
    </ligand>
</feature>
<feature type="binding site">
    <location>
        <position position="117"/>
    </location>
    <ligand>
        <name>Zn(2+)</name>
        <dbReference type="ChEBI" id="CHEBI:29105"/>
        <note>structural</note>
    </ligand>
</feature>
<feature type="binding site">
    <location>
        <position position="126"/>
    </location>
    <ligand>
        <name>Zn(2+)</name>
        <dbReference type="ChEBI" id="CHEBI:29105"/>
        <note>structural</note>
    </ligand>
</feature>
<feature type="binding site">
    <location>
        <position position="129"/>
    </location>
    <ligand>
        <name>Zn(2+)</name>
        <dbReference type="ChEBI" id="CHEBI:29105"/>
        <note>structural</note>
    </ligand>
</feature>
<feature type="binding site">
    <location>
        <position position="164"/>
    </location>
    <ligand>
        <name>Cu cation</name>
        <dbReference type="ChEBI" id="CHEBI:23378"/>
        <note>catalytic</note>
    </ligand>
</feature>
<feature type="disulfide bond">
    <location>
        <begin position="90"/>
        <end position="186"/>
    </location>
</feature>
<feature type="sequence conflict" description="In Ref. 2; AAB02816." evidence="2" ref="2">
    <original>E</original>
    <variation>D</variation>
    <location>
        <position position="113"/>
    </location>
</feature>
<feature type="sequence conflict" description="In Ref. 2; AAB02816." evidence="2" ref="2">
    <original>N</original>
    <variation>D</variation>
    <location>
        <position position="124"/>
    </location>
</feature>
<feature type="sequence conflict" description="In Ref. 2; AAB02816." evidence="2" ref="2">
    <original>FVE</original>
    <variation>TIA</variation>
    <location>
        <begin position="134"/>
        <end position="136"/>
    </location>
</feature>
<feature type="strand" evidence="3">
    <location>
        <begin position="39"/>
        <end position="44"/>
    </location>
</feature>
<feature type="strand" evidence="3">
    <location>
        <begin position="47"/>
        <end position="49"/>
    </location>
</feature>
<feature type="strand" evidence="3">
    <location>
        <begin position="52"/>
        <end position="62"/>
    </location>
</feature>
<feature type="strand" evidence="3">
    <location>
        <begin position="65"/>
        <end position="72"/>
    </location>
</feature>
<feature type="strand" evidence="3">
    <location>
        <begin position="77"/>
        <end position="80"/>
    </location>
</feature>
<feature type="strand" evidence="3">
    <location>
        <begin position="82"/>
        <end position="88"/>
    </location>
</feature>
<feature type="strand" evidence="3">
    <location>
        <begin position="93"/>
        <end position="95"/>
    </location>
</feature>
<feature type="strand" evidence="3">
    <location>
        <begin position="98"/>
        <end position="100"/>
    </location>
</feature>
<feature type="helix" evidence="3">
    <location>
        <begin position="103"/>
        <end position="105"/>
    </location>
</feature>
<feature type="strand" evidence="3">
    <location>
        <begin position="133"/>
        <end position="135"/>
    </location>
</feature>
<feature type="strand" evidence="3">
    <location>
        <begin position="145"/>
        <end position="147"/>
    </location>
</feature>
<feature type="helix" evidence="3">
    <location>
        <begin position="153"/>
        <end position="156"/>
    </location>
</feature>
<feature type="strand" evidence="3">
    <location>
        <begin position="159"/>
        <end position="166"/>
    </location>
</feature>
<feature type="strand" evidence="3">
    <location>
        <begin position="170"/>
        <end position="175"/>
    </location>
</feature>
<feature type="helix" evidence="3">
    <location>
        <begin position="176"/>
        <end position="179"/>
    </location>
</feature>
<feature type="strand" evidence="3">
    <location>
        <begin position="182"/>
        <end position="189"/>
    </location>
</feature>
<sequence>MKLTNLALAFTLFGASAVAFAHADHDHKKADNSSVEKLVVQVQQLDPVKGNKDVGTVEITESAYGLVFTPHLHGLAQGLHGFHIHQNPSCEPKEKDGKLVAGLGAGGHWDPKETKQHGYPWSDNAHLGDLPALFVEHDGSATNPVLAPRLKKLDEVKGHSLMIHEGGDNHSDHPAPLGGGGPRMACGVIK</sequence>
<comment type="function">
    <text>Destroys radicals which are normally produced within the cells and which are toxic to biological systems.</text>
</comment>
<comment type="catalytic activity">
    <reaction>
        <text>2 superoxide + 2 H(+) = H2O2 + O2</text>
        <dbReference type="Rhea" id="RHEA:20696"/>
        <dbReference type="ChEBI" id="CHEBI:15378"/>
        <dbReference type="ChEBI" id="CHEBI:15379"/>
        <dbReference type="ChEBI" id="CHEBI:16240"/>
        <dbReference type="ChEBI" id="CHEBI:18421"/>
        <dbReference type="EC" id="1.15.1.1"/>
    </reaction>
</comment>
<comment type="cofactor">
    <cofactor>
        <name>Cu cation</name>
        <dbReference type="ChEBI" id="CHEBI:23378"/>
    </cofactor>
    <text>Binds 1 copper ion per subunit.</text>
</comment>
<comment type="cofactor">
    <cofactor>
        <name>Zn(2+)</name>
        <dbReference type="ChEBI" id="CHEBI:29105"/>
    </cofactor>
    <text>Binds 1 zinc ion per subunit.</text>
</comment>
<comment type="subunit">
    <text>Homodimer.</text>
</comment>
<comment type="subcellular location">
    <subcellularLocation>
        <location>Periplasm</location>
    </subcellularLocation>
</comment>
<comment type="similarity">
    <text evidence="2">Belongs to the Cu-Zn superoxide dismutase family.</text>
</comment>
<protein>
    <recommendedName>
        <fullName>Superoxide dismutase [Cu-Zn]</fullName>
        <ecNumber>1.15.1.1</ecNumber>
    </recommendedName>
</protein>
<dbReference type="EC" id="1.15.1.1"/>
<dbReference type="EMBL" id="X99396">
    <property type="protein sequence ID" value="CAA67771.1"/>
    <property type="molecule type" value="Genomic_DNA"/>
</dbReference>
<dbReference type="EMBL" id="U51440">
    <property type="protein sequence ID" value="AAB02816.1"/>
    <property type="molecule type" value="Genomic_DNA"/>
</dbReference>
<dbReference type="EMBL" id="X63626">
    <property type="protein sequence ID" value="CAA45174.1"/>
    <property type="molecule type" value="Genomic_DNA"/>
</dbReference>
<dbReference type="EMBL" id="X83123">
    <property type="protein sequence ID" value="CAA58204.1"/>
    <property type="molecule type" value="Genomic_DNA"/>
</dbReference>
<dbReference type="PIR" id="I39650">
    <property type="entry name" value="I39650"/>
</dbReference>
<dbReference type="RefSeq" id="WP_005603006.1">
    <property type="nucleotide sequence ID" value="NZ_UIFY01000002.1"/>
</dbReference>
<dbReference type="PDB" id="2APS">
    <property type="method" value="X-ray"/>
    <property type="resolution" value="1.90 A"/>
    <property type="chains" value="A/B=29-190"/>
</dbReference>
<dbReference type="PDBsum" id="2APS"/>
<dbReference type="SMR" id="P24702"/>
<dbReference type="OrthoDB" id="5431326at2"/>
<dbReference type="EvolutionaryTrace" id="P24702"/>
<dbReference type="GO" id="GO:0042597">
    <property type="term" value="C:periplasmic space"/>
    <property type="evidence" value="ECO:0007669"/>
    <property type="project" value="UniProtKB-SubCell"/>
</dbReference>
<dbReference type="GO" id="GO:0005507">
    <property type="term" value="F:copper ion binding"/>
    <property type="evidence" value="ECO:0007669"/>
    <property type="project" value="InterPro"/>
</dbReference>
<dbReference type="GO" id="GO:0004784">
    <property type="term" value="F:superoxide dismutase activity"/>
    <property type="evidence" value="ECO:0007669"/>
    <property type="project" value="UniProtKB-EC"/>
</dbReference>
<dbReference type="CDD" id="cd00305">
    <property type="entry name" value="Cu-Zn_Superoxide_Dismutase"/>
    <property type="match status" value="1"/>
</dbReference>
<dbReference type="FunFam" id="2.60.40.200:FF:000002">
    <property type="entry name" value="Superoxide dismutase [Cu-Zn]"/>
    <property type="match status" value="1"/>
</dbReference>
<dbReference type="Gene3D" id="2.60.40.200">
    <property type="entry name" value="Superoxide dismutase, copper/zinc binding domain"/>
    <property type="match status" value="1"/>
</dbReference>
<dbReference type="InterPro" id="IPR036423">
    <property type="entry name" value="SOD-like_Cu/Zn_dom_sf"/>
</dbReference>
<dbReference type="InterPro" id="IPR024134">
    <property type="entry name" value="SOD_Cu/Zn_/chaperone"/>
</dbReference>
<dbReference type="InterPro" id="IPR018152">
    <property type="entry name" value="SOD_Cu/Zn_BS"/>
</dbReference>
<dbReference type="InterPro" id="IPR001424">
    <property type="entry name" value="SOD_Cu_Zn_dom"/>
</dbReference>
<dbReference type="NCBIfam" id="NF007628">
    <property type="entry name" value="PRK10290.1"/>
    <property type="match status" value="1"/>
</dbReference>
<dbReference type="PANTHER" id="PTHR10003">
    <property type="entry name" value="SUPEROXIDE DISMUTASE CU-ZN -RELATED"/>
    <property type="match status" value="1"/>
</dbReference>
<dbReference type="Pfam" id="PF00080">
    <property type="entry name" value="Sod_Cu"/>
    <property type="match status" value="1"/>
</dbReference>
<dbReference type="SUPFAM" id="SSF49329">
    <property type="entry name" value="Cu,Zn superoxide dismutase-like"/>
    <property type="match status" value="1"/>
</dbReference>
<dbReference type="PROSITE" id="PS00087">
    <property type="entry name" value="SOD_CU_ZN_1"/>
    <property type="match status" value="1"/>
</dbReference>
<dbReference type="PROSITE" id="PS00332">
    <property type="entry name" value="SOD_CU_ZN_2"/>
    <property type="match status" value="1"/>
</dbReference>